<organism>
    <name type="scientific">Escherichia coli (strain ATCC 8739 / DSM 1576 / NBRC 3972 / NCIMB 8545 / WDCM 00012 / Crooks)</name>
    <dbReference type="NCBI Taxonomy" id="481805"/>
    <lineage>
        <taxon>Bacteria</taxon>
        <taxon>Pseudomonadati</taxon>
        <taxon>Pseudomonadota</taxon>
        <taxon>Gammaproteobacteria</taxon>
        <taxon>Enterobacterales</taxon>
        <taxon>Enterobacteriaceae</taxon>
        <taxon>Escherichia</taxon>
    </lineage>
</organism>
<evidence type="ECO:0000255" key="1">
    <source>
        <dbReference type="HAMAP-Rule" id="MF_00178"/>
    </source>
</evidence>
<comment type="function">
    <text evidence="1">Catalyzes the formation of 6,7-dimethyl-8-ribityllumazine by condensation of 5-amino-6-(D-ribitylamino)uracil with 3,4-dihydroxy-2-butanone 4-phosphate. This is the penultimate step in the biosynthesis of riboflavin.</text>
</comment>
<comment type="catalytic activity">
    <reaction evidence="1">
        <text>(2S)-2-hydroxy-3-oxobutyl phosphate + 5-amino-6-(D-ribitylamino)uracil = 6,7-dimethyl-8-(1-D-ribityl)lumazine + phosphate + 2 H2O + H(+)</text>
        <dbReference type="Rhea" id="RHEA:26152"/>
        <dbReference type="ChEBI" id="CHEBI:15377"/>
        <dbReference type="ChEBI" id="CHEBI:15378"/>
        <dbReference type="ChEBI" id="CHEBI:15934"/>
        <dbReference type="ChEBI" id="CHEBI:43474"/>
        <dbReference type="ChEBI" id="CHEBI:58201"/>
        <dbReference type="ChEBI" id="CHEBI:58830"/>
        <dbReference type="EC" id="2.5.1.78"/>
    </reaction>
</comment>
<comment type="pathway">
    <text evidence="1">Cofactor biosynthesis; riboflavin biosynthesis; riboflavin from 2-hydroxy-3-oxobutyl phosphate and 5-amino-6-(D-ribitylamino)uracil: step 1/2.</text>
</comment>
<comment type="subunit">
    <text evidence="1">Forms an icosahedral capsid composed of 60 subunits, arranged as a dodecamer of pentamers.</text>
</comment>
<comment type="similarity">
    <text evidence="1">Belongs to the DMRL synthase family.</text>
</comment>
<gene>
    <name evidence="1" type="primary">ribH</name>
    <name type="ordered locus">EcolC_3218</name>
</gene>
<reference key="1">
    <citation type="submission" date="2008-02" db="EMBL/GenBank/DDBJ databases">
        <title>Complete sequence of Escherichia coli C str. ATCC 8739.</title>
        <authorList>
            <person name="Copeland A."/>
            <person name="Lucas S."/>
            <person name="Lapidus A."/>
            <person name="Glavina del Rio T."/>
            <person name="Dalin E."/>
            <person name="Tice H."/>
            <person name="Bruce D."/>
            <person name="Goodwin L."/>
            <person name="Pitluck S."/>
            <person name="Kiss H."/>
            <person name="Brettin T."/>
            <person name="Detter J.C."/>
            <person name="Han C."/>
            <person name="Kuske C.R."/>
            <person name="Schmutz J."/>
            <person name="Larimer F."/>
            <person name="Land M."/>
            <person name="Hauser L."/>
            <person name="Kyrpides N."/>
            <person name="Mikhailova N."/>
            <person name="Ingram L."/>
            <person name="Richardson P."/>
        </authorList>
    </citation>
    <scope>NUCLEOTIDE SEQUENCE [LARGE SCALE GENOMIC DNA]</scope>
    <source>
        <strain>ATCC 8739 / DSM 1576 / NBRC 3972 / NCIMB 8545 / WDCM 00012 / Crooks</strain>
    </source>
</reference>
<protein>
    <recommendedName>
        <fullName evidence="1">6,7-dimethyl-8-ribityllumazine synthase</fullName>
        <shortName evidence="1">DMRL synthase</shortName>
        <shortName evidence="1">LS</shortName>
        <shortName evidence="1">Lumazine synthase</shortName>
        <ecNumber evidence="1">2.5.1.78</ecNumber>
    </recommendedName>
</protein>
<accession>B1J034</accession>
<name>RISB_ECOLC</name>
<proteinExistence type="inferred from homology"/>
<feature type="chain" id="PRO_1000077233" description="6,7-dimethyl-8-ribityllumazine synthase">
    <location>
        <begin position="1"/>
        <end position="156"/>
    </location>
</feature>
<feature type="active site" description="Proton donor" evidence="1">
    <location>
        <position position="89"/>
    </location>
</feature>
<feature type="binding site" evidence="1">
    <location>
        <position position="22"/>
    </location>
    <ligand>
        <name>5-amino-6-(D-ribitylamino)uracil</name>
        <dbReference type="ChEBI" id="CHEBI:15934"/>
    </ligand>
</feature>
<feature type="binding site" evidence="1">
    <location>
        <begin position="57"/>
        <end position="59"/>
    </location>
    <ligand>
        <name>5-amino-6-(D-ribitylamino)uracil</name>
        <dbReference type="ChEBI" id="CHEBI:15934"/>
    </ligand>
</feature>
<feature type="binding site" evidence="1">
    <location>
        <begin position="81"/>
        <end position="83"/>
    </location>
    <ligand>
        <name>5-amino-6-(D-ribitylamino)uracil</name>
        <dbReference type="ChEBI" id="CHEBI:15934"/>
    </ligand>
</feature>
<feature type="binding site" evidence="1">
    <location>
        <begin position="86"/>
        <end position="87"/>
    </location>
    <ligand>
        <name>(2S)-2-hydroxy-3-oxobutyl phosphate</name>
        <dbReference type="ChEBI" id="CHEBI:58830"/>
    </ligand>
</feature>
<feature type="binding site" evidence="1">
    <location>
        <position position="114"/>
    </location>
    <ligand>
        <name>5-amino-6-(D-ribitylamino)uracil</name>
        <dbReference type="ChEBI" id="CHEBI:15934"/>
    </ligand>
</feature>
<feature type="binding site" evidence="1">
    <location>
        <position position="128"/>
    </location>
    <ligand>
        <name>(2S)-2-hydroxy-3-oxobutyl phosphate</name>
        <dbReference type="ChEBI" id="CHEBI:58830"/>
    </ligand>
</feature>
<keyword id="KW-0686">Riboflavin biosynthesis</keyword>
<keyword id="KW-0808">Transferase</keyword>
<dbReference type="EC" id="2.5.1.78" evidence="1"/>
<dbReference type="EMBL" id="CP000946">
    <property type="protein sequence ID" value="ACA78840.1"/>
    <property type="molecule type" value="Genomic_DNA"/>
</dbReference>
<dbReference type="SMR" id="B1J034"/>
<dbReference type="KEGG" id="ecl:EcolC_3218"/>
<dbReference type="HOGENOM" id="CLU_089358_1_1_6"/>
<dbReference type="UniPathway" id="UPA00275">
    <property type="reaction ID" value="UER00404"/>
</dbReference>
<dbReference type="GO" id="GO:0005829">
    <property type="term" value="C:cytosol"/>
    <property type="evidence" value="ECO:0007669"/>
    <property type="project" value="TreeGrafter"/>
</dbReference>
<dbReference type="GO" id="GO:0009349">
    <property type="term" value="C:riboflavin synthase complex"/>
    <property type="evidence" value="ECO:0007669"/>
    <property type="project" value="InterPro"/>
</dbReference>
<dbReference type="GO" id="GO:0000906">
    <property type="term" value="F:6,7-dimethyl-8-ribityllumazine synthase activity"/>
    <property type="evidence" value="ECO:0007669"/>
    <property type="project" value="UniProtKB-UniRule"/>
</dbReference>
<dbReference type="GO" id="GO:0009231">
    <property type="term" value="P:riboflavin biosynthetic process"/>
    <property type="evidence" value="ECO:0007669"/>
    <property type="project" value="UniProtKB-UniRule"/>
</dbReference>
<dbReference type="CDD" id="cd09209">
    <property type="entry name" value="Lumazine_synthase-I"/>
    <property type="match status" value="1"/>
</dbReference>
<dbReference type="FunFam" id="3.40.50.960:FF:000001">
    <property type="entry name" value="6,7-dimethyl-8-ribityllumazine synthase"/>
    <property type="match status" value="1"/>
</dbReference>
<dbReference type="Gene3D" id="3.40.50.960">
    <property type="entry name" value="Lumazine/riboflavin synthase"/>
    <property type="match status" value="1"/>
</dbReference>
<dbReference type="HAMAP" id="MF_00178">
    <property type="entry name" value="Lumazine_synth"/>
    <property type="match status" value="1"/>
</dbReference>
<dbReference type="InterPro" id="IPR034964">
    <property type="entry name" value="LS"/>
</dbReference>
<dbReference type="InterPro" id="IPR002180">
    <property type="entry name" value="LS/RS"/>
</dbReference>
<dbReference type="InterPro" id="IPR036467">
    <property type="entry name" value="LS/RS_sf"/>
</dbReference>
<dbReference type="NCBIfam" id="TIGR00114">
    <property type="entry name" value="lumazine-synth"/>
    <property type="match status" value="1"/>
</dbReference>
<dbReference type="NCBIfam" id="NF000812">
    <property type="entry name" value="PRK00061.1-4"/>
    <property type="match status" value="1"/>
</dbReference>
<dbReference type="PANTHER" id="PTHR21058:SF0">
    <property type="entry name" value="6,7-DIMETHYL-8-RIBITYLLUMAZINE SYNTHASE"/>
    <property type="match status" value="1"/>
</dbReference>
<dbReference type="PANTHER" id="PTHR21058">
    <property type="entry name" value="6,7-DIMETHYL-8-RIBITYLLUMAZINE SYNTHASE DMRL SYNTHASE LUMAZINE SYNTHASE"/>
    <property type="match status" value="1"/>
</dbReference>
<dbReference type="Pfam" id="PF00885">
    <property type="entry name" value="DMRL_synthase"/>
    <property type="match status" value="1"/>
</dbReference>
<dbReference type="SUPFAM" id="SSF52121">
    <property type="entry name" value="Lumazine synthase"/>
    <property type="match status" value="1"/>
</dbReference>
<sequence length="156" mass="16157">MNIIEANVATPDARVAITIARFNNFINDSLLEGAIDALKRIGQVKDENITVVWVPGAYELPLAAGALAKTGKYDAVIALGTVIRGGTAHFEYVAGGASNGLAHVAQDSEIPVAFGVLTTESIEQAIERAGTKAGNKGAEAALTALEMINVLKAIKA</sequence>